<organism>
    <name type="scientific">Legionella pneumophila (strain Paris)</name>
    <dbReference type="NCBI Taxonomy" id="297246"/>
    <lineage>
        <taxon>Bacteria</taxon>
        <taxon>Pseudomonadati</taxon>
        <taxon>Pseudomonadota</taxon>
        <taxon>Gammaproteobacteria</taxon>
        <taxon>Legionellales</taxon>
        <taxon>Legionellaceae</taxon>
        <taxon>Legionella</taxon>
    </lineage>
</organism>
<evidence type="ECO:0000255" key="1">
    <source>
        <dbReference type="HAMAP-Rule" id="MF_00182"/>
    </source>
</evidence>
<keyword id="KW-0648">Protein biosynthesis</keyword>
<keyword id="KW-0808">Transferase</keyword>
<proteinExistence type="inferred from homology"/>
<gene>
    <name evidence="1" type="primary">fmt</name>
    <name type="ordered locus">lpp2647</name>
</gene>
<sequence length="314" mass="34488">MNDLTVVFAGTPEFGLPCLDALIQSRHHLKAVYTQPDRPAGRGRKLQESPVKEWAINHQIPVYQPLNFKNQEAVDELSALKPDVMVVIAYGLILPKAVLEIPRLGCINVHASLLPRWRGASPIQHAILHGDAESGVTIMQMDVGLDTGPMLCKATCPVTSSDTAGSLHDKLAKMSVKPLLDVLEALASNSAQFELQNNELATYAGKINKEEARINWHQSAVEIDRKIRAFNPWPVAYTLAGELMLRIHQAKATDIMSTEMPGMVLNVDKNGMLVATNDNALLVEKIQFPGAKVISVRDWLNSGKTQLHTGLMLQ</sequence>
<protein>
    <recommendedName>
        <fullName evidence="1">Methionyl-tRNA formyltransferase</fullName>
        <ecNumber evidence="1">2.1.2.9</ecNumber>
    </recommendedName>
</protein>
<reference key="1">
    <citation type="journal article" date="2004" name="Nat. Genet.">
        <title>Evidence in the Legionella pneumophila genome for exploitation of host cell functions and high genome plasticity.</title>
        <authorList>
            <person name="Cazalet C."/>
            <person name="Rusniok C."/>
            <person name="Brueggemann H."/>
            <person name="Zidane N."/>
            <person name="Magnier A."/>
            <person name="Ma L."/>
            <person name="Tichit M."/>
            <person name="Jarraud S."/>
            <person name="Bouchier C."/>
            <person name="Vandenesch F."/>
            <person name="Kunst F."/>
            <person name="Etienne J."/>
            <person name="Glaser P."/>
            <person name="Buchrieser C."/>
        </authorList>
    </citation>
    <scope>NUCLEOTIDE SEQUENCE [LARGE SCALE GENOMIC DNA]</scope>
    <source>
        <strain>Paris</strain>
    </source>
</reference>
<accession>Q5X1U6</accession>
<comment type="function">
    <text evidence="1">Attaches a formyl group to the free amino group of methionyl-tRNA(fMet). The formyl group appears to play a dual role in the initiator identity of N-formylmethionyl-tRNA by promoting its recognition by IF2 and preventing the misappropriation of this tRNA by the elongation apparatus.</text>
</comment>
<comment type="catalytic activity">
    <reaction evidence="1">
        <text>L-methionyl-tRNA(fMet) + (6R)-10-formyltetrahydrofolate = N-formyl-L-methionyl-tRNA(fMet) + (6S)-5,6,7,8-tetrahydrofolate + H(+)</text>
        <dbReference type="Rhea" id="RHEA:24380"/>
        <dbReference type="Rhea" id="RHEA-COMP:9952"/>
        <dbReference type="Rhea" id="RHEA-COMP:9953"/>
        <dbReference type="ChEBI" id="CHEBI:15378"/>
        <dbReference type="ChEBI" id="CHEBI:57453"/>
        <dbReference type="ChEBI" id="CHEBI:78530"/>
        <dbReference type="ChEBI" id="CHEBI:78844"/>
        <dbReference type="ChEBI" id="CHEBI:195366"/>
        <dbReference type="EC" id="2.1.2.9"/>
    </reaction>
</comment>
<comment type="similarity">
    <text evidence="1">Belongs to the Fmt family.</text>
</comment>
<feature type="chain" id="PRO_0000082981" description="Methionyl-tRNA formyltransferase">
    <location>
        <begin position="1"/>
        <end position="314"/>
    </location>
</feature>
<feature type="binding site" evidence="1">
    <location>
        <begin position="112"/>
        <end position="115"/>
    </location>
    <ligand>
        <name>(6S)-5,6,7,8-tetrahydrofolate</name>
        <dbReference type="ChEBI" id="CHEBI:57453"/>
    </ligand>
</feature>
<dbReference type="EC" id="2.1.2.9" evidence="1"/>
<dbReference type="EMBL" id="CR628336">
    <property type="protein sequence ID" value="CAH13800.1"/>
    <property type="molecule type" value="Genomic_DNA"/>
</dbReference>
<dbReference type="RefSeq" id="WP_015961698.1">
    <property type="nucleotide sequence ID" value="NC_006368.1"/>
</dbReference>
<dbReference type="SMR" id="Q5X1U6"/>
<dbReference type="KEGG" id="lpp:lpp2647"/>
<dbReference type="LegioList" id="lpp2647"/>
<dbReference type="HOGENOM" id="CLU_033347_1_1_6"/>
<dbReference type="GO" id="GO:0005829">
    <property type="term" value="C:cytosol"/>
    <property type="evidence" value="ECO:0007669"/>
    <property type="project" value="TreeGrafter"/>
</dbReference>
<dbReference type="GO" id="GO:0004479">
    <property type="term" value="F:methionyl-tRNA formyltransferase activity"/>
    <property type="evidence" value="ECO:0007669"/>
    <property type="project" value="UniProtKB-UniRule"/>
</dbReference>
<dbReference type="CDD" id="cd08646">
    <property type="entry name" value="FMT_core_Met-tRNA-FMT_N"/>
    <property type="match status" value="1"/>
</dbReference>
<dbReference type="CDD" id="cd08704">
    <property type="entry name" value="Met_tRNA_FMT_C"/>
    <property type="match status" value="1"/>
</dbReference>
<dbReference type="FunFam" id="3.40.50.12230:FF:000001">
    <property type="entry name" value="Methionyl-tRNA formyltransferase"/>
    <property type="match status" value="1"/>
</dbReference>
<dbReference type="Gene3D" id="3.40.50.12230">
    <property type="match status" value="1"/>
</dbReference>
<dbReference type="HAMAP" id="MF_00182">
    <property type="entry name" value="Formyl_trans"/>
    <property type="match status" value="1"/>
</dbReference>
<dbReference type="InterPro" id="IPR005794">
    <property type="entry name" value="Fmt"/>
</dbReference>
<dbReference type="InterPro" id="IPR005793">
    <property type="entry name" value="Formyl_trans_C"/>
</dbReference>
<dbReference type="InterPro" id="IPR002376">
    <property type="entry name" value="Formyl_transf_N"/>
</dbReference>
<dbReference type="InterPro" id="IPR036477">
    <property type="entry name" value="Formyl_transf_N_sf"/>
</dbReference>
<dbReference type="InterPro" id="IPR011034">
    <property type="entry name" value="Formyl_transferase-like_C_sf"/>
</dbReference>
<dbReference type="InterPro" id="IPR001555">
    <property type="entry name" value="GART_AS"/>
</dbReference>
<dbReference type="InterPro" id="IPR044135">
    <property type="entry name" value="Met-tRNA-FMT_C"/>
</dbReference>
<dbReference type="InterPro" id="IPR041711">
    <property type="entry name" value="Met-tRNA-FMT_N"/>
</dbReference>
<dbReference type="NCBIfam" id="TIGR00460">
    <property type="entry name" value="fmt"/>
    <property type="match status" value="1"/>
</dbReference>
<dbReference type="PANTHER" id="PTHR11138">
    <property type="entry name" value="METHIONYL-TRNA FORMYLTRANSFERASE"/>
    <property type="match status" value="1"/>
</dbReference>
<dbReference type="PANTHER" id="PTHR11138:SF5">
    <property type="entry name" value="METHIONYL-TRNA FORMYLTRANSFERASE, MITOCHONDRIAL"/>
    <property type="match status" value="1"/>
</dbReference>
<dbReference type="Pfam" id="PF02911">
    <property type="entry name" value="Formyl_trans_C"/>
    <property type="match status" value="1"/>
</dbReference>
<dbReference type="Pfam" id="PF00551">
    <property type="entry name" value="Formyl_trans_N"/>
    <property type="match status" value="1"/>
</dbReference>
<dbReference type="SUPFAM" id="SSF50486">
    <property type="entry name" value="FMT C-terminal domain-like"/>
    <property type="match status" value="1"/>
</dbReference>
<dbReference type="SUPFAM" id="SSF53328">
    <property type="entry name" value="Formyltransferase"/>
    <property type="match status" value="1"/>
</dbReference>
<dbReference type="PROSITE" id="PS00373">
    <property type="entry name" value="GART"/>
    <property type="match status" value="1"/>
</dbReference>
<name>FMT_LEGPA</name>